<comment type="function">
    <text evidence="1">Catalyzes the formation of S-adenosylmethionine from methionine and ATP.</text>
</comment>
<comment type="catalytic activity">
    <reaction evidence="1">
        <text>L-methionine + ATP + H2O = S-adenosyl-L-methionine + phosphate + diphosphate</text>
        <dbReference type="Rhea" id="RHEA:21080"/>
        <dbReference type="ChEBI" id="CHEBI:15377"/>
        <dbReference type="ChEBI" id="CHEBI:30616"/>
        <dbReference type="ChEBI" id="CHEBI:33019"/>
        <dbReference type="ChEBI" id="CHEBI:43474"/>
        <dbReference type="ChEBI" id="CHEBI:57844"/>
        <dbReference type="ChEBI" id="CHEBI:59789"/>
        <dbReference type="EC" id="2.5.1.6"/>
    </reaction>
</comment>
<comment type="cofactor">
    <cofactor evidence="1">
        <name>Mg(2+)</name>
        <dbReference type="ChEBI" id="CHEBI:18420"/>
    </cofactor>
</comment>
<comment type="pathway">
    <text evidence="1">Amino-acid biosynthesis; S-adenosyl-L-methionine biosynthesis; S-adenosyl-L-methionine from L-methionine: step 1/1.</text>
</comment>
<comment type="similarity">
    <text evidence="1">Belongs to the AdoMet synthase 2 family.</text>
</comment>
<protein>
    <recommendedName>
        <fullName evidence="1">S-adenosylmethionine synthase</fullName>
        <shortName evidence="1">AdoMet synthase</shortName>
        <ecNumber evidence="1">2.5.1.6</ecNumber>
    </recommendedName>
    <alternativeName>
        <fullName evidence="1">Methionine adenosyltransferase</fullName>
    </alternativeName>
</protein>
<feature type="chain" id="PRO_1000018654" description="S-adenosylmethionine synthase">
    <location>
        <begin position="1"/>
        <end position="405"/>
    </location>
</feature>
<feature type="binding site" evidence="1">
    <location>
        <begin position="141"/>
        <end position="146"/>
    </location>
    <ligand>
        <name>ATP</name>
        <dbReference type="ChEBI" id="CHEBI:30616"/>
    </ligand>
</feature>
<evidence type="ECO:0000255" key="1">
    <source>
        <dbReference type="HAMAP-Rule" id="MF_00136"/>
    </source>
</evidence>
<dbReference type="EC" id="2.5.1.6" evidence="1"/>
<dbReference type="EMBL" id="CP000609">
    <property type="protein sequence ID" value="ABO36065.1"/>
    <property type="molecule type" value="Genomic_DNA"/>
</dbReference>
<dbReference type="RefSeq" id="WP_011869511.1">
    <property type="nucleotide sequence ID" value="NC_009135.1"/>
</dbReference>
<dbReference type="SMR" id="A4G0T1"/>
<dbReference type="STRING" id="402880.MmarC5_1768"/>
<dbReference type="GeneID" id="4927937"/>
<dbReference type="KEGG" id="mmq:MmarC5_1768"/>
<dbReference type="eggNOG" id="arCOG01678">
    <property type="taxonomic scope" value="Archaea"/>
</dbReference>
<dbReference type="HOGENOM" id="CLU_057642_0_0_2"/>
<dbReference type="OrthoDB" id="204488at2157"/>
<dbReference type="UniPathway" id="UPA00315">
    <property type="reaction ID" value="UER00080"/>
</dbReference>
<dbReference type="Proteomes" id="UP000000253">
    <property type="component" value="Chromosome"/>
</dbReference>
<dbReference type="GO" id="GO:0005524">
    <property type="term" value="F:ATP binding"/>
    <property type="evidence" value="ECO:0007669"/>
    <property type="project" value="UniProtKB-UniRule"/>
</dbReference>
<dbReference type="GO" id="GO:0000287">
    <property type="term" value="F:magnesium ion binding"/>
    <property type="evidence" value="ECO:0007669"/>
    <property type="project" value="UniProtKB-UniRule"/>
</dbReference>
<dbReference type="GO" id="GO:0004478">
    <property type="term" value="F:methionine adenosyltransferase activity"/>
    <property type="evidence" value="ECO:0007669"/>
    <property type="project" value="UniProtKB-UniRule"/>
</dbReference>
<dbReference type="GO" id="GO:0006730">
    <property type="term" value="P:one-carbon metabolic process"/>
    <property type="evidence" value="ECO:0007669"/>
    <property type="project" value="UniProtKB-KW"/>
</dbReference>
<dbReference type="GO" id="GO:0006556">
    <property type="term" value="P:S-adenosylmethionine biosynthetic process"/>
    <property type="evidence" value="ECO:0007669"/>
    <property type="project" value="UniProtKB-UniRule"/>
</dbReference>
<dbReference type="Gene3D" id="3.30.300.10">
    <property type="match status" value="1"/>
</dbReference>
<dbReference type="Gene3D" id="3.30.300.280">
    <property type="entry name" value="S-adenosylmethionine synthetase, C-terminal domain"/>
    <property type="match status" value="2"/>
</dbReference>
<dbReference type="HAMAP" id="MF_00136">
    <property type="entry name" value="S_AdoMet_synth2"/>
    <property type="match status" value="1"/>
</dbReference>
<dbReference type="InterPro" id="IPR027790">
    <property type="entry name" value="AdoMet_synthase_2_family"/>
</dbReference>
<dbReference type="InterPro" id="IPR042544">
    <property type="entry name" value="AdoMet_synthase_3"/>
</dbReference>
<dbReference type="InterPro" id="IPR002795">
    <property type="entry name" value="S-AdoMet_synthetase_arc"/>
</dbReference>
<dbReference type="NCBIfam" id="NF003364">
    <property type="entry name" value="PRK04439.1-3"/>
    <property type="match status" value="1"/>
</dbReference>
<dbReference type="NCBIfam" id="NF003366">
    <property type="entry name" value="PRK04439.1-5"/>
    <property type="match status" value="1"/>
</dbReference>
<dbReference type="PANTHER" id="PTHR36697">
    <property type="entry name" value="S-ADENOSYLMETHIONINE SYNTHASE"/>
    <property type="match status" value="1"/>
</dbReference>
<dbReference type="PANTHER" id="PTHR36697:SF1">
    <property type="entry name" value="S-ADENOSYLMETHIONINE SYNTHASE"/>
    <property type="match status" value="1"/>
</dbReference>
<dbReference type="Pfam" id="PF01941">
    <property type="entry name" value="AdoMet_Synthase"/>
    <property type="match status" value="1"/>
</dbReference>
<proteinExistence type="inferred from homology"/>
<sequence>MANIVVKRLERTPIDETPVEIVERKGIGHPDSICDGIAESVSVALCKMYKEKMGVVLHHNTDQVELVGGYAYPELGGGCMVSPIYVLLSGRATMEVLDKKSGKIIKLPVNTTAVNAARDYLKKAIRNMDLEKDVVVDCRIGQGSVDLVEVFDRKRSEIPHANDTSFGVGHAPLSTTEKIVLETEKLLNSDALKAEIPAVGEDIKVMGLREGKKITLTIAMAAVDKYVNSCADYVKVKELAKAKVEENAKKYLDSHELEVCINTADDDEDCIFLTVTGTSAEMGDDGSVGRGNRANGLITPFRPMSMEATSGKNPINHIGKIYNILSNIIAEDVAKIEGVRECQIRILSQIGKPITEPKILDIEMIPENGFELEELSPKAKEVAQKWLENISEVTERIVSGNVTTF</sequence>
<organism>
    <name type="scientific">Methanococcus maripaludis (strain C5 / ATCC BAA-1333)</name>
    <dbReference type="NCBI Taxonomy" id="402880"/>
    <lineage>
        <taxon>Archaea</taxon>
        <taxon>Methanobacteriati</taxon>
        <taxon>Methanobacteriota</taxon>
        <taxon>Methanomada group</taxon>
        <taxon>Methanococci</taxon>
        <taxon>Methanococcales</taxon>
        <taxon>Methanococcaceae</taxon>
        <taxon>Methanococcus</taxon>
    </lineage>
</organism>
<accession>A4G0T1</accession>
<keyword id="KW-0067">ATP-binding</keyword>
<keyword id="KW-0460">Magnesium</keyword>
<keyword id="KW-0547">Nucleotide-binding</keyword>
<keyword id="KW-0554">One-carbon metabolism</keyword>
<keyword id="KW-0808">Transferase</keyword>
<gene>
    <name evidence="1" type="primary">mat</name>
    <name type="ordered locus">MmarC5_1768</name>
</gene>
<reference key="1">
    <citation type="submission" date="2007-03" db="EMBL/GenBank/DDBJ databases">
        <title>Complete sequence of chromosome of Methanococcus maripaludis C5.</title>
        <authorList>
            <consortium name="US DOE Joint Genome Institute"/>
            <person name="Copeland A."/>
            <person name="Lucas S."/>
            <person name="Lapidus A."/>
            <person name="Barry K."/>
            <person name="Glavina del Rio T."/>
            <person name="Dalin E."/>
            <person name="Tice H."/>
            <person name="Pitluck S."/>
            <person name="Chertkov O."/>
            <person name="Brettin T."/>
            <person name="Bruce D."/>
            <person name="Han C."/>
            <person name="Detter J.C."/>
            <person name="Schmutz J."/>
            <person name="Larimer F."/>
            <person name="Land M."/>
            <person name="Hauser L."/>
            <person name="Kyrpides N."/>
            <person name="Mikhailova N."/>
            <person name="Sieprawska-Lupa M."/>
            <person name="Whitman W.B."/>
            <person name="Richardson P."/>
        </authorList>
    </citation>
    <scope>NUCLEOTIDE SEQUENCE [LARGE SCALE GENOMIC DNA]</scope>
    <source>
        <strain>C5 / ATCC BAA-1333</strain>
    </source>
</reference>
<name>METK_METM5</name>